<feature type="chain" id="PRO_0000206622" description="Translocation protein SEC62">
    <location>
        <begin position="1"/>
        <end position="257"/>
    </location>
</feature>
<feature type="topological domain" description="Cytoplasmic" evidence="2">
    <location>
        <begin position="1"/>
        <end position="137"/>
    </location>
</feature>
<feature type="transmembrane region" description="Helical" evidence="2">
    <location>
        <begin position="138"/>
        <end position="158"/>
    </location>
</feature>
<feature type="topological domain" description="Lumenal" evidence="2">
    <location>
        <begin position="159"/>
        <end position="170"/>
    </location>
</feature>
<feature type="transmembrane region" description="Helical" evidence="2">
    <location>
        <begin position="171"/>
        <end position="191"/>
    </location>
</feature>
<feature type="topological domain" description="Cytoplasmic" evidence="2">
    <location>
        <begin position="192"/>
        <end position="257"/>
    </location>
</feature>
<protein>
    <recommendedName>
        <fullName>Translocation protein SEC62</fullName>
    </recommendedName>
</protein>
<gene>
    <name type="primary">SEC62</name>
    <name type="ordered locus">CAGL0H05731g</name>
</gene>
<dbReference type="EMBL" id="CR380954">
    <property type="protein sequence ID" value="CAG59978.1"/>
    <property type="molecule type" value="Genomic_DNA"/>
</dbReference>
<dbReference type="RefSeq" id="XP_447045.1">
    <property type="nucleotide sequence ID" value="XM_447045.1"/>
</dbReference>
<dbReference type="SMR" id="Q6FRU9"/>
<dbReference type="FunCoup" id="Q6FRU9">
    <property type="interactions" value="157"/>
</dbReference>
<dbReference type="STRING" id="284593.Q6FRU9"/>
<dbReference type="EnsemblFungi" id="CAGL0H05731g-T">
    <property type="protein sequence ID" value="CAGL0H05731g-T-p1"/>
    <property type="gene ID" value="CAGL0H05731g"/>
</dbReference>
<dbReference type="KEGG" id="cgr:2888597"/>
<dbReference type="CGD" id="CAL0130526">
    <property type="gene designation" value="CAGL0H05731g"/>
</dbReference>
<dbReference type="VEuPathDB" id="FungiDB:CAGL0H05731g"/>
<dbReference type="eggNOG" id="KOG2927">
    <property type="taxonomic scope" value="Eukaryota"/>
</dbReference>
<dbReference type="HOGENOM" id="CLU_040936_1_0_1"/>
<dbReference type="InParanoid" id="Q6FRU9"/>
<dbReference type="OMA" id="FKPLYGW"/>
<dbReference type="Proteomes" id="UP000002428">
    <property type="component" value="Chromosome H"/>
</dbReference>
<dbReference type="GO" id="GO:0031207">
    <property type="term" value="C:Sec62/Sec63 complex"/>
    <property type="evidence" value="ECO:0007669"/>
    <property type="project" value="EnsemblFungi"/>
</dbReference>
<dbReference type="GO" id="GO:0071256">
    <property type="term" value="C:translocon complex"/>
    <property type="evidence" value="ECO:0007669"/>
    <property type="project" value="EnsemblFungi"/>
</dbReference>
<dbReference type="GO" id="GO:0008320">
    <property type="term" value="F:protein transmembrane transporter activity"/>
    <property type="evidence" value="ECO:0007669"/>
    <property type="project" value="EnsemblFungi"/>
</dbReference>
<dbReference type="GO" id="GO:0031204">
    <property type="term" value="P:post-translational protein targeting to membrane, translocation"/>
    <property type="evidence" value="ECO:0007669"/>
    <property type="project" value="EnsemblFungi"/>
</dbReference>
<dbReference type="InterPro" id="IPR004728">
    <property type="entry name" value="Sec62"/>
</dbReference>
<dbReference type="InterPro" id="IPR011553">
    <property type="entry name" value="Sec62_asco"/>
</dbReference>
<dbReference type="NCBIfam" id="TIGR00869">
    <property type="entry name" value="sec62"/>
    <property type="match status" value="1"/>
</dbReference>
<dbReference type="PANTHER" id="PTHR12443">
    <property type="entry name" value="TRANSLOCATION PROTEIN SEC62"/>
    <property type="match status" value="1"/>
</dbReference>
<dbReference type="PANTHER" id="PTHR12443:SF9">
    <property type="entry name" value="TRANSLOCATION PROTEIN SEC62"/>
    <property type="match status" value="1"/>
</dbReference>
<dbReference type="Pfam" id="PF03839">
    <property type="entry name" value="Sec62"/>
    <property type="match status" value="1"/>
</dbReference>
<sequence length="257" mass="30095">MDQSAVLAIASFVRNRSELKARKGLFQDKPTDFFRYKRFVRCLKSDAYKKKSLKQPDLYPPLPEDEEKFAELARGIFVEFIKNQLVVPGQKLHSYECKEHGLKPSKDYPHLIMSTKATLDDNEYYLWHYNPKTLTDYLIVFGVIGVILAFVCYPLWPASMRRGTYYLSLAAFGFLGVFFGVAIIRLIVFLISMLFIREKGGFWLFPNLFEDCGFFDSFKPLYGFGDKETYTYIKKMKKQKKRQAKKEKLKKLKEKAN</sequence>
<evidence type="ECO:0000250" key="1"/>
<evidence type="ECO:0000255" key="2"/>
<evidence type="ECO:0000305" key="3"/>
<comment type="function">
    <text evidence="1">Required for preprotein translocation.</text>
</comment>
<comment type="subunit">
    <text evidence="1">Part of a complex that contains SEC61, SEC62, SEC63, SEC66 and SEC72.</text>
</comment>
<comment type="subcellular location">
    <subcellularLocation>
        <location evidence="1">Endoplasmic reticulum membrane</location>
        <topology evidence="1">Multi-pass membrane protein</topology>
    </subcellularLocation>
</comment>
<comment type="similarity">
    <text evidence="3">Belongs to the SEC62 family.</text>
</comment>
<reference key="1">
    <citation type="journal article" date="2004" name="Nature">
        <title>Genome evolution in yeasts.</title>
        <authorList>
            <person name="Dujon B."/>
            <person name="Sherman D."/>
            <person name="Fischer G."/>
            <person name="Durrens P."/>
            <person name="Casaregola S."/>
            <person name="Lafontaine I."/>
            <person name="de Montigny J."/>
            <person name="Marck C."/>
            <person name="Neuveglise C."/>
            <person name="Talla E."/>
            <person name="Goffard N."/>
            <person name="Frangeul L."/>
            <person name="Aigle M."/>
            <person name="Anthouard V."/>
            <person name="Babour A."/>
            <person name="Barbe V."/>
            <person name="Barnay S."/>
            <person name="Blanchin S."/>
            <person name="Beckerich J.-M."/>
            <person name="Beyne E."/>
            <person name="Bleykasten C."/>
            <person name="Boisrame A."/>
            <person name="Boyer J."/>
            <person name="Cattolico L."/>
            <person name="Confanioleri F."/>
            <person name="de Daruvar A."/>
            <person name="Despons L."/>
            <person name="Fabre E."/>
            <person name="Fairhead C."/>
            <person name="Ferry-Dumazet H."/>
            <person name="Groppi A."/>
            <person name="Hantraye F."/>
            <person name="Hennequin C."/>
            <person name="Jauniaux N."/>
            <person name="Joyet P."/>
            <person name="Kachouri R."/>
            <person name="Kerrest A."/>
            <person name="Koszul R."/>
            <person name="Lemaire M."/>
            <person name="Lesur I."/>
            <person name="Ma L."/>
            <person name="Muller H."/>
            <person name="Nicaud J.-M."/>
            <person name="Nikolski M."/>
            <person name="Oztas S."/>
            <person name="Ozier-Kalogeropoulos O."/>
            <person name="Pellenz S."/>
            <person name="Potier S."/>
            <person name="Richard G.-F."/>
            <person name="Straub M.-L."/>
            <person name="Suleau A."/>
            <person name="Swennen D."/>
            <person name="Tekaia F."/>
            <person name="Wesolowski-Louvel M."/>
            <person name="Westhof E."/>
            <person name="Wirth B."/>
            <person name="Zeniou-Meyer M."/>
            <person name="Zivanovic Y."/>
            <person name="Bolotin-Fukuhara M."/>
            <person name="Thierry A."/>
            <person name="Bouchier C."/>
            <person name="Caudron B."/>
            <person name="Scarpelli C."/>
            <person name="Gaillardin C."/>
            <person name="Weissenbach J."/>
            <person name="Wincker P."/>
            <person name="Souciet J.-L."/>
        </authorList>
    </citation>
    <scope>NUCLEOTIDE SEQUENCE [LARGE SCALE GENOMIC DNA]</scope>
    <source>
        <strain>ATCC 2001 / BCRC 20586 / JCM 3761 / NBRC 0622 / NRRL Y-65 / CBS 138</strain>
    </source>
</reference>
<keyword id="KW-0256">Endoplasmic reticulum</keyword>
<keyword id="KW-0472">Membrane</keyword>
<keyword id="KW-0653">Protein transport</keyword>
<keyword id="KW-1185">Reference proteome</keyword>
<keyword id="KW-0811">Translocation</keyword>
<keyword id="KW-0812">Transmembrane</keyword>
<keyword id="KW-1133">Transmembrane helix</keyword>
<keyword id="KW-0813">Transport</keyword>
<name>SEC62_CANGA</name>
<accession>Q6FRU9</accession>
<organism>
    <name type="scientific">Candida glabrata (strain ATCC 2001 / BCRC 20586 / JCM 3761 / NBRC 0622 / NRRL Y-65 / CBS 138)</name>
    <name type="common">Yeast</name>
    <name type="synonym">Nakaseomyces glabratus</name>
    <dbReference type="NCBI Taxonomy" id="284593"/>
    <lineage>
        <taxon>Eukaryota</taxon>
        <taxon>Fungi</taxon>
        <taxon>Dikarya</taxon>
        <taxon>Ascomycota</taxon>
        <taxon>Saccharomycotina</taxon>
        <taxon>Saccharomycetes</taxon>
        <taxon>Saccharomycetales</taxon>
        <taxon>Saccharomycetaceae</taxon>
        <taxon>Nakaseomyces</taxon>
    </lineage>
</organism>
<proteinExistence type="inferred from homology"/>